<accession>O08524</accession>
<evidence type="ECO:0000250" key="1"/>
<evidence type="ECO:0000255" key="2"/>
<evidence type="ECO:0000255" key="3">
    <source>
        <dbReference type="PROSITE-ProRule" id="PRU00375"/>
    </source>
</evidence>
<evidence type="ECO:0000269" key="4">
    <source>
    </source>
</evidence>
<evidence type="ECO:0000305" key="5"/>
<dbReference type="EMBL" id="X99806">
    <property type="protein sequence ID" value="CAA68139.2"/>
    <property type="molecule type" value="mRNA"/>
</dbReference>
<dbReference type="CCDS" id="CCDS29907.1"/>
<dbReference type="RefSeq" id="NP_033374.2">
    <property type="nucleotide sequence ID" value="NM_009348.3"/>
</dbReference>
<dbReference type="RefSeq" id="XP_006526966.1">
    <property type="nucleotide sequence ID" value="XM_006526903.2"/>
</dbReference>
<dbReference type="SMR" id="O08524"/>
<dbReference type="FunCoup" id="O08524">
    <property type="interactions" value="174"/>
</dbReference>
<dbReference type="STRING" id="10090.ENSMUSP00000025936"/>
<dbReference type="GlyCosmos" id="O08524">
    <property type="glycosylation" value="4 sites, No reported glycans"/>
</dbReference>
<dbReference type="GlyGen" id="O08524">
    <property type="glycosylation" value="5 sites"/>
</dbReference>
<dbReference type="PaxDb" id="10090-ENSMUSP00000025936"/>
<dbReference type="Antibodypedia" id="53513">
    <property type="antibodies" value="83 antibodies from 12 providers"/>
</dbReference>
<dbReference type="DNASU" id="21684"/>
<dbReference type="Ensembl" id="ENSMUST00000025936.12">
    <property type="protein sequence ID" value="ENSMUSP00000025936.6"/>
    <property type="gene ID" value="ENSMUSG00000024979.14"/>
</dbReference>
<dbReference type="GeneID" id="21684"/>
<dbReference type="KEGG" id="mmu:21684"/>
<dbReference type="UCSC" id="uc008hxm.1">
    <property type="organism name" value="mouse"/>
</dbReference>
<dbReference type="AGR" id="MGI:109574"/>
<dbReference type="CTD" id="6975"/>
<dbReference type="MGI" id="MGI:109574">
    <property type="gene designation" value="Tectb"/>
</dbReference>
<dbReference type="VEuPathDB" id="HostDB:ENSMUSG00000024979"/>
<dbReference type="eggNOG" id="ENOG502RGQ6">
    <property type="taxonomic scope" value="Eukaryota"/>
</dbReference>
<dbReference type="GeneTree" id="ENSGT00940000159064"/>
<dbReference type="InParanoid" id="O08524"/>
<dbReference type="OMA" id="CETHICD"/>
<dbReference type="PhylomeDB" id="O08524"/>
<dbReference type="TreeFam" id="TF330284"/>
<dbReference type="Reactome" id="R-MMU-163125">
    <property type="pathway name" value="Post-translational modification: synthesis of GPI-anchored proteins"/>
</dbReference>
<dbReference type="BioGRID-ORCS" id="21684">
    <property type="hits" value="3 hits in 77 CRISPR screens"/>
</dbReference>
<dbReference type="ChiTaRS" id="Tectb">
    <property type="organism name" value="mouse"/>
</dbReference>
<dbReference type="PRO" id="PR:O08524"/>
<dbReference type="Proteomes" id="UP000000589">
    <property type="component" value="Chromosome 19"/>
</dbReference>
<dbReference type="RNAct" id="O08524">
    <property type="molecule type" value="protein"/>
</dbReference>
<dbReference type="Bgee" id="ENSMUSG00000024979">
    <property type="expression patterns" value="Expressed in epithelium of cochlear duct and 16 other cell types or tissues"/>
</dbReference>
<dbReference type="ExpressionAtlas" id="O08524">
    <property type="expression patterns" value="baseline and differential"/>
</dbReference>
<dbReference type="GO" id="GO:0031012">
    <property type="term" value="C:extracellular matrix"/>
    <property type="evidence" value="ECO:0000314"/>
    <property type="project" value="MGI"/>
</dbReference>
<dbReference type="GO" id="GO:0005576">
    <property type="term" value="C:extracellular region"/>
    <property type="evidence" value="ECO:0007669"/>
    <property type="project" value="UniProtKB-KW"/>
</dbReference>
<dbReference type="GO" id="GO:0005886">
    <property type="term" value="C:plasma membrane"/>
    <property type="evidence" value="ECO:0007669"/>
    <property type="project" value="UniProtKB-SubCell"/>
</dbReference>
<dbReference type="GO" id="GO:0098552">
    <property type="term" value="C:side of membrane"/>
    <property type="evidence" value="ECO:0007669"/>
    <property type="project" value="UniProtKB-KW"/>
</dbReference>
<dbReference type="GO" id="GO:0005201">
    <property type="term" value="F:extracellular matrix structural constituent"/>
    <property type="evidence" value="ECO:0000314"/>
    <property type="project" value="MGI"/>
</dbReference>
<dbReference type="GO" id="GO:0007605">
    <property type="term" value="P:sensory perception of sound"/>
    <property type="evidence" value="ECO:0000304"/>
    <property type="project" value="MGI"/>
</dbReference>
<dbReference type="FunFam" id="2.60.40.4100:FF:000006">
    <property type="entry name" value="beta-tectorin"/>
    <property type="match status" value="1"/>
</dbReference>
<dbReference type="Gene3D" id="2.60.40.4100">
    <property type="entry name" value="Zona pellucida, ZP-C domain"/>
    <property type="match status" value="1"/>
</dbReference>
<dbReference type="InterPro" id="IPR055355">
    <property type="entry name" value="ZP-C"/>
</dbReference>
<dbReference type="InterPro" id="IPR042235">
    <property type="entry name" value="ZP-C_dom"/>
</dbReference>
<dbReference type="InterPro" id="IPR048290">
    <property type="entry name" value="ZP_chr"/>
</dbReference>
<dbReference type="InterPro" id="IPR001507">
    <property type="entry name" value="ZP_dom"/>
</dbReference>
<dbReference type="InterPro" id="IPR017977">
    <property type="entry name" value="ZP_dom_CS"/>
</dbReference>
<dbReference type="PANTHER" id="PTHR14002:SF13">
    <property type="entry name" value="BETA-TECTORIN"/>
    <property type="match status" value="1"/>
</dbReference>
<dbReference type="PANTHER" id="PTHR14002">
    <property type="entry name" value="ENDOGLIN/TGF-BETA RECEPTOR TYPE III"/>
    <property type="match status" value="1"/>
</dbReference>
<dbReference type="Pfam" id="PF00100">
    <property type="entry name" value="Zona_pellucida"/>
    <property type="match status" value="1"/>
</dbReference>
<dbReference type="PRINTS" id="PR00023">
    <property type="entry name" value="ZPELLUCIDA"/>
</dbReference>
<dbReference type="SMART" id="SM00241">
    <property type="entry name" value="ZP"/>
    <property type="match status" value="1"/>
</dbReference>
<dbReference type="PROSITE" id="PS00682">
    <property type="entry name" value="ZP_1"/>
    <property type="match status" value="1"/>
</dbReference>
<dbReference type="PROSITE" id="PS51034">
    <property type="entry name" value="ZP_2"/>
    <property type="match status" value="1"/>
</dbReference>
<feature type="signal peptide" evidence="2">
    <location>
        <begin position="1"/>
        <end position="17"/>
    </location>
</feature>
<feature type="chain" id="PRO_0000041743" description="Beta-tectorin">
    <location>
        <begin position="18"/>
        <end position="305"/>
    </location>
</feature>
<feature type="propeptide" id="PRO_0000041744" description="Removed in mature form" evidence="2">
    <location>
        <begin position="306"/>
        <end position="329"/>
    </location>
</feature>
<feature type="domain" description="ZP" evidence="3">
    <location>
        <begin position="19"/>
        <end position="283"/>
    </location>
</feature>
<feature type="lipid moiety-binding region" description="GPI-anchor amidated alanine" evidence="2">
    <location>
        <position position="305"/>
    </location>
</feature>
<feature type="glycosylation site" description="N-linked (GlcNAc...) asparagine" evidence="2">
    <location>
        <position position="80"/>
    </location>
</feature>
<feature type="glycosylation site" description="N-linked (GlcNAc...) asparagine" evidence="2">
    <location>
        <position position="104"/>
    </location>
</feature>
<feature type="glycosylation site" description="N-linked (GlcNAc...) asparagine" evidence="2">
    <location>
        <position position="116"/>
    </location>
</feature>
<feature type="glycosylation site" description="N-linked (GlcNAc...) asparagine" evidence="2">
    <location>
        <position position="145"/>
    </location>
</feature>
<feature type="disulfide bond" evidence="1">
    <location>
        <begin position="204"/>
        <end position="264"/>
    </location>
</feature>
<proteinExistence type="evidence at protein level"/>
<gene>
    <name type="primary">Tectb</name>
</gene>
<keyword id="KW-1003">Cell membrane</keyword>
<keyword id="KW-1015">Disulfide bond</keyword>
<keyword id="KW-0272">Extracellular matrix</keyword>
<keyword id="KW-0325">Glycoprotein</keyword>
<keyword id="KW-0336">GPI-anchor</keyword>
<keyword id="KW-0449">Lipoprotein</keyword>
<keyword id="KW-0472">Membrane</keyword>
<keyword id="KW-1185">Reference proteome</keyword>
<keyword id="KW-0964">Secreted</keyword>
<keyword id="KW-0732">Signal</keyword>
<reference key="1">
    <citation type="journal article" date="1997" name="J. Biol. Chem.">
        <title>The mouse tectorins. Modular matrix proteins of the inner ear homologous to components of the sperm-egg adhesion system.</title>
        <authorList>
            <person name="Legan P.K."/>
            <person name="Rau A."/>
            <person name="Keene J.N."/>
            <person name="Richardson G.P."/>
        </authorList>
    </citation>
    <scope>NUCLEOTIDE SEQUENCE [MRNA]</scope>
    <source>
        <strain>CD-1</strain>
        <tissue>Cochlea</tissue>
    </source>
</reference>
<reference key="2">
    <citation type="journal article" date="2014" name="J. Neurosci.">
        <title>Loss of the tectorial membrane protein CEACAM16 enhances spontaneous, stimulus-frequency, and transiently evoked otoacoustic emissions.</title>
        <authorList>
            <person name="Cheatham M.A."/>
            <person name="Goodyear R.J."/>
            <person name="Homma K."/>
            <person name="Legan P.K."/>
            <person name="Korchagina J."/>
            <person name="Naskar S."/>
            <person name="Siegel J.H."/>
            <person name="Dallos P."/>
            <person name="Zheng J."/>
            <person name="Richardson G.P."/>
        </authorList>
    </citation>
    <scope>INTERACTION WITH CEACAM16</scope>
</reference>
<protein>
    <recommendedName>
        <fullName>Beta-tectorin</fullName>
    </recommendedName>
</protein>
<organism>
    <name type="scientific">Mus musculus</name>
    <name type="common">Mouse</name>
    <dbReference type="NCBI Taxonomy" id="10090"/>
    <lineage>
        <taxon>Eukaryota</taxon>
        <taxon>Metazoa</taxon>
        <taxon>Chordata</taxon>
        <taxon>Craniata</taxon>
        <taxon>Vertebrata</taxon>
        <taxon>Euteleostomi</taxon>
        <taxon>Mammalia</taxon>
        <taxon>Eutheria</taxon>
        <taxon>Euarchontoglires</taxon>
        <taxon>Glires</taxon>
        <taxon>Rodentia</taxon>
        <taxon>Myomorpha</taxon>
        <taxon>Muroidea</taxon>
        <taxon>Muridae</taxon>
        <taxon>Murinae</taxon>
        <taxon>Mus</taxon>
        <taxon>Mus</taxon>
    </lineage>
</organism>
<name>TECTB_MOUSE</name>
<sequence>MVVRAFVLLALFAEASAKSCTPNKADVILVFCYPKTIITKIPECPYGWEVHQLALGGLCYNGVHEGGYYQFVIPDLSPKNKSYCGTQSEYKPPIYHFYSHIVSNDSTVIVKNQPVNYSFSCTYHSTYLVNQAAFDQRVATVHVKNGSMGTFESQLSLNFYTNAKFSTKKEAPFVLETSEIGSDLFAGVEAKGLSVRFKVVLNSCWATPSADFMYPLQWQLINKGCPTDETVLVHENGKDHRATFQFNAFRFQNIPKLSKVWLHCETFICDSEKLSCPVNCDKRKRMLRDQTGGVLVVELSLRSRAFSGLCDFSDVLLHLILMLGTWAVL</sequence>
<comment type="function">
    <text evidence="1">One of the major non-collagenous components of the tectorial membrane (By similarity). The tectorial membrane is an extracellular matrix of the inner ear that covers the neuroepithelium of the cochlea and contacts the stereocilia bundles of specialized sensory hair cells. Sound induces movement of these hair cells relative to the tectorial membrane, deflects the stereocilia and leads to fluctuations in hair-cell membrane potential, transducing sound into electrical signals.</text>
</comment>
<comment type="subunit">
    <text evidence="4 5">May form homomeric filament after self-association or heteromeric filament after association with alpha-tectorin (Probable). Interacts with CEACAM16 (PubMed:25080593).</text>
</comment>
<comment type="subcellular location">
    <subcellularLocation>
        <location evidence="5">Cell membrane</location>
        <topology evidence="5">Lipid-anchor</topology>
        <topology evidence="5">GPI-anchor</topology>
        <orientation evidence="5">Extracellular side</orientation>
    </subcellularLocation>
    <subcellularLocation>
        <location>Secreted</location>
        <location>Extracellular space</location>
        <location>Extracellular matrix</location>
    </subcellularLocation>
    <text evidence="1">Found in the non-collagenous matrix of the tectorial membrane.</text>
</comment>
<comment type="domain">
    <text>Zona pellucida domain may enable to form filaments.</text>
</comment>
<comment type="PTM">
    <text>The presence of a hydrophobic C-terminus preceded by a potential cleavage site strongly suggests that tectorins are synthesized as glycosylphosphatidylinositol-linked, membrane-bound precursors. Tectorins are targeted to the apical surface of the inner ear epithelia by the lipid and proteolytically released into the extracellular compartment.</text>
</comment>